<dbReference type="EMBL" id="CP000111">
    <property type="protein sequence ID" value="ABB50786.1"/>
    <property type="molecule type" value="Genomic_DNA"/>
</dbReference>
<dbReference type="RefSeq" id="WP_011377267.1">
    <property type="nucleotide sequence ID" value="NC_007577.1"/>
</dbReference>
<dbReference type="SMR" id="Q318A9"/>
<dbReference type="STRING" id="74546.PMT9312_1725"/>
<dbReference type="KEGG" id="pmi:PMT9312_1725"/>
<dbReference type="eggNOG" id="COG0239">
    <property type="taxonomic scope" value="Bacteria"/>
</dbReference>
<dbReference type="HOGENOM" id="CLU_114342_2_3_3"/>
<dbReference type="OrthoDB" id="9815830at2"/>
<dbReference type="Proteomes" id="UP000002715">
    <property type="component" value="Chromosome"/>
</dbReference>
<dbReference type="GO" id="GO:0005886">
    <property type="term" value="C:plasma membrane"/>
    <property type="evidence" value="ECO:0007669"/>
    <property type="project" value="UniProtKB-SubCell"/>
</dbReference>
<dbReference type="GO" id="GO:0062054">
    <property type="term" value="F:fluoride channel activity"/>
    <property type="evidence" value="ECO:0007669"/>
    <property type="project" value="UniProtKB-UniRule"/>
</dbReference>
<dbReference type="GO" id="GO:0046872">
    <property type="term" value="F:metal ion binding"/>
    <property type="evidence" value="ECO:0007669"/>
    <property type="project" value="UniProtKB-KW"/>
</dbReference>
<dbReference type="GO" id="GO:0140114">
    <property type="term" value="P:cellular detoxification of fluoride"/>
    <property type="evidence" value="ECO:0007669"/>
    <property type="project" value="UniProtKB-UniRule"/>
</dbReference>
<dbReference type="HAMAP" id="MF_00454">
    <property type="entry name" value="FluC"/>
    <property type="match status" value="1"/>
</dbReference>
<dbReference type="InterPro" id="IPR003691">
    <property type="entry name" value="FluC"/>
</dbReference>
<dbReference type="PANTHER" id="PTHR28259">
    <property type="entry name" value="FLUORIDE EXPORT PROTEIN 1-RELATED"/>
    <property type="match status" value="1"/>
</dbReference>
<dbReference type="PANTHER" id="PTHR28259:SF1">
    <property type="entry name" value="FLUORIDE EXPORT PROTEIN 1-RELATED"/>
    <property type="match status" value="1"/>
</dbReference>
<dbReference type="Pfam" id="PF02537">
    <property type="entry name" value="CRCB"/>
    <property type="match status" value="1"/>
</dbReference>
<sequence>MDITAISLVLFGSTFGLIFRMFIQNNLKINIGFNIQNTSIVNFIASFFLGILLALNLTNNNLLLLFYIGFLGCFSTFSSFIYQLFVLLQKRKFMHLFFHYFEVIIISFICFYLGYYLMQIIK</sequence>
<evidence type="ECO:0000255" key="1">
    <source>
        <dbReference type="HAMAP-Rule" id="MF_00454"/>
    </source>
</evidence>
<accession>Q318A9</accession>
<protein>
    <recommendedName>
        <fullName evidence="1">Fluoride-specific ion channel FluC 2</fullName>
    </recommendedName>
</protein>
<comment type="function">
    <text evidence="1">Fluoride-specific ion channel. Important for reducing fluoride concentration in the cell, thus reducing its toxicity.</text>
</comment>
<comment type="catalytic activity">
    <reaction evidence="1">
        <text>fluoride(in) = fluoride(out)</text>
        <dbReference type="Rhea" id="RHEA:76159"/>
        <dbReference type="ChEBI" id="CHEBI:17051"/>
    </reaction>
    <physiologicalReaction direction="left-to-right" evidence="1">
        <dbReference type="Rhea" id="RHEA:76160"/>
    </physiologicalReaction>
</comment>
<comment type="activity regulation">
    <text evidence="1">Na(+) is not transported, but it plays an essential structural role and its presence is essential for fluoride channel function.</text>
</comment>
<comment type="subcellular location">
    <subcellularLocation>
        <location evidence="1">Cell inner membrane</location>
        <topology evidence="1">Multi-pass membrane protein</topology>
    </subcellularLocation>
</comment>
<comment type="similarity">
    <text evidence="1">Belongs to the fluoride channel Fluc/FEX (TC 1.A.43) family.</text>
</comment>
<organism>
    <name type="scientific">Prochlorococcus marinus (strain MIT 9312)</name>
    <dbReference type="NCBI Taxonomy" id="74546"/>
    <lineage>
        <taxon>Bacteria</taxon>
        <taxon>Bacillati</taxon>
        <taxon>Cyanobacteriota</taxon>
        <taxon>Cyanophyceae</taxon>
        <taxon>Synechococcales</taxon>
        <taxon>Prochlorococcaceae</taxon>
        <taxon>Prochlorococcus</taxon>
    </lineage>
</organism>
<gene>
    <name evidence="1" type="primary">fluC2</name>
    <name evidence="1" type="synonym">crcB2</name>
    <name type="ordered locus">PMT9312_1726</name>
    <name type="ordered locus">PMT9312_1725</name>
</gene>
<reference key="1">
    <citation type="journal article" date="2006" name="Science">
        <title>Genomic islands and the ecology and evolution of Prochlorococcus.</title>
        <authorList>
            <person name="Coleman M.L."/>
            <person name="Sullivan M.B."/>
            <person name="Martiny A.C."/>
            <person name="Steglich C."/>
            <person name="Barry K."/>
            <person name="Delong E.F."/>
            <person name="Chisholm S.W."/>
        </authorList>
    </citation>
    <scope>NUCLEOTIDE SEQUENCE [LARGE SCALE GENOMIC DNA]</scope>
    <source>
        <strain>MIT 9312</strain>
    </source>
</reference>
<feature type="chain" id="PRO_0000252910" description="Fluoride-specific ion channel FluC 2">
    <location>
        <begin position="1"/>
        <end position="122"/>
    </location>
</feature>
<feature type="transmembrane region" description="Helical" evidence="1">
    <location>
        <begin position="3"/>
        <end position="23"/>
    </location>
</feature>
<feature type="transmembrane region" description="Helical" evidence="1">
    <location>
        <begin position="38"/>
        <end position="58"/>
    </location>
</feature>
<feature type="transmembrane region" description="Helical" evidence="1">
    <location>
        <begin position="62"/>
        <end position="82"/>
    </location>
</feature>
<feature type="transmembrane region" description="Helical" evidence="1">
    <location>
        <begin position="93"/>
        <end position="113"/>
    </location>
</feature>
<feature type="binding site" evidence="1">
    <location>
        <position position="72"/>
    </location>
    <ligand>
        <name>Na(+)</name>
        <dbReference type="ChEBI" id="CHEBI:29101"/>
        <note>structural</note>
    </ligand>
</feature>
<feature type="binding site" evidence="1">
    <location>
        <position position="75"/>
    </location>
    <ligand>
        <name>Na(+)</name>
        <dbReference type="ChEBI" id="CHEBI:29101"/>
        <note>structural</note>
    </ligand>
</feature>
<proteinExistence type="inferred from homology"/>
<keyword id="KW-0997">Cell inner membrane</keyword>
<keyword id="KW-1003">Cell membrane</keyword>
<keyword id="KW-0407">Ion channel</keyword>
<keyword id="KW-0406">Ion transport</keyword>
<keyword id="KW-0472">Membrane</keyword>
<keyword id="KW-0479">Metal-binding</keyword>
<keyword id="KW-0915">Sodium</keyword>
<keyword id="KW-0812">Transmembrane</keyword>
<keyword id="KW-1133">Transmembrane helix</keyword>
<keyword id="KW-0813">Transport</keyword>
<name>FLUC2_PROM9</name>